<sequence>MEALVYTFLLVSTLGIIFFAIFFREPPKVPTKK</sequence>
<feature type="chain" id="PRO_0000276315" description="Photosystem II reaction center protein T">
    <location>
        <begin position="1"/>
        <end position="33"/>
    </location>
</feature>
<feature type="transmembrane region" description="Helical" evidence="1">
    <location>
        <begin position="3"/>
        <end position="23"/>
    </location>
</feature>
<geneLocation type="chloroplast"/>
<proteinExistence type="inferred from homology"/>
<dbReference type="EMBL" id="EF115542">
    <property type="protein sequence ID" value="ABK79522.1"/>
    <property type="molecule type" value="Genomic_DNA"/>
</dbReference>
<dbReference type="RefSeq" id="YP_899434.1">
    <property type="nucleotide sequence ID" value="NC_008602.1"/>
</dbReference>
<dbReference type="SMR" id="A1E9V1"/>
<dbReference type="FunCoup" id="A1E9V1">
    <property type="interactions" value="44"/>
</dbReference>
<dbReference type="STRING" id="4558.A1E9V1"/>
<dbReference type="EnsemblPlants" id="KXG32558">
    <property type="protein sequence ID" value="KXG32558"/>
    <property type="gene ID" value="SORBI_3003G169000"/>
</dbReference>
<dbReference type="GeneID" id="4549218"/>
<dbReference type="Gramene" id="KXG32558">
    <property type="protein sequence ID" value="KXG32558"/>
    <property type="gene ID" value="SORBI_3003G169000"/>
</dbReference>
<dbReference type="KEGG" id="sbi:4549218"/>
<dbReference type="InParanoid" id="A1E9V1"/>
<dbReference type="OrthoDB" id="1558483at2759"/>
<dbReference type="Proteomes" id="UP000000768">
    <property type="component" value="Chloroplast"/>
</dbReference>
<dbReference type="ExpressionAtlas" id="A1E9V1">
    <property type="expression patterns" value="baseline"/>
</dbReference>
<dbReference type="GO" id="GO:0009535">
    <property type="term" value="C:chloroplast thylakoid membrane"/>
    <property type="evidence" value="ECO:0007669"/>
    <property type="project" value="UniProtKB-SubCell"/>
</dbReference>
<dbReference type="GO" id="GO:0009539">
    <property type="term" value="C:photosystem II reaction center"/>
    <property type="evidence" value="ECO:0007669"/>
    <property type="project" value="InterPro"/>
</dbReference>
<dbReference type="GO" id="GO:0015979">
    <property type="term" value="P:photosynthesis"/>
    <property type="evidence" value="ECO:0007669"/>
    <property type="project" value="UniProtKB-UniRule"/>
</dbReference>
<dbReference type="HAMAP" id="MF_00808">
    <property type="entry name" value="PSII_PsbT"/>
    <property type="match status" value="1"/>
</dbReference>
<dbReference type="InterPro" id="IPR001743">
    <property type="entry name" value="PSII_PsbT"/>
</dbReference>
<dbReference type="InterPro" id="IPR037268">
    <property type="entry name" value="PSII_PsbT_sf"/>
</dbReference>
<dbReference type="PANTHER" id="PTHR36411">
    <property type="match status" value="1"/>
</dbReference>
<dbReference type="PANTHER" id="PTHR36411:SF2">
    <property type="entry name" value="PHOTOSYSTEM II REACTION CENTER PROTEIN T"/>
    <property type="match status" value="1"/>
</dbReference>
<dbReference type="Pfam" id="PF01405">
    <property type="entry name" value="PsbT"/>
    <property type="match status" value="1"/>
</dbReference>
<dbReference type="SUPFAM" id="SSF161029">
    <property type="entry name" value="Photosystem II reaction center protein T, PsbT"/>
    <property type="match status" value="1"/>
</dbReference>
<gene>
    <name evidence="1" type="primary">psbT</name>
</gene>
<protein>
    <recommendedName>
        <fullName evidence="1">Photosystem II reaction center protein T</fullName>
        <shortName evidence="1">PSII-T</shortName>
    </recommendedName>
</protein>
<evidence type="ECO:0000255" key="1">
    <source>
        <dbReference type="HAMAP-Rule" id="MF_00808"/>
    </source>
</evidence>
<comment type="function">
    <text evidence="1">Found at the monomer-monomer interface of the photosystem II (PS II) dimer, plays a role in assembly and dimerization of PSII. PSII is a light-driven water plastoquinone oxidoreductase, using light energy to abstract electrons from H(2)O, generating a proton gradient subsequently used for ATP formation.</text>
</comment>
<comment type="subunit">
    <text evidence="1">PSII is composed of 1 copy each of membrane proteins PsbA, PsbB, PsbC, PsbD, PsbE, PsbF, PsbH, PsbI, PsbJ, PsbK, PsbL, PsbM, PsbT, PsbY, PsbZ, Psb30/Ycf12, at least 3 peripheral proteins of the oxygen-evolving complex and a large number of cofactors. It forms dimeric complexes.</text>
</comment>
<comment type="subcellular location">
    <subcellularLocation>
        <location evidence="1">Plastid</location>
        <location evidence="1">Chloroplast thylakoid membrane</location>
        <topology evidence="1">Single-pass membrane protein</topology>
    </subcellularLocation>
</comment>
<comment type="similarity">
    <text evidence="1">Belongs to the PsbT family.</text>
</comment>
<name>PSBT_SORBI</name>
<reference key="1">
    <citation type="journal article" date="2007" name="Theor. Appl. Genet.">
        <title>Complete chloroplast genome sequences of Hordeum vulgare, Sorghum bicolor and Agrostis stolonifera, and comparative analyses with other grass genomes.</title>
        <authorList>
            <person name="Saski C."/>
            <person name="Lee S.-B."/>
            <person name="Fjellheim S."/>
            <person name="Guda C."/>
            <person name="Jansen R.K."/>
            <person name="Luo H."/>
            <person name="Tomkins J."/>
            <person name="Rognli O.A."/>
            <person name="Daniell H."/>
            <person name="Clarke J.L."/>
        </authorList>
    </citation>
    <scope>NUCLEOTIDE SEQUENCE [LARGE SCALE GENOMIC DNA]</scope>
    <source>
        <strain>cv. BTx623</strain>
    </source>
</reference>
<accession>A1E9V1</accession>
<organism>
    <name type="scientific">Sorghum bicolor</name>
    <name type="common">Sorghum</name>
    <name type="synonym">Sorghum vulgare</name>
    <dbReference type="NCBI Taxonomy" id="4558"/>
    <lineage>
        <taxon>Eukaryota</taxon>
        <taxon>Viridiplantae</taxon>
        <taxon>Streptophyta</taxon>
        <taxon>Embryophyta</taxon>
        <taxon>Tracheophyta</taxon>
        <taxon>Spermatophyta</taxon>
        <taxon>Magnoliopsida</taxon>
        <taxon>Liliopsida</taxon>
        <taxon>Poales</taxon>
        <taxon>Poaceae</taxon>
        <taxon>PACMAD clade</taxon>
        <taxon>Panicoideae</taxon>
        <taxon>Andropogonodae</taxon>
        <taxon>Andropogoneae</taxon>
        <taxon>Sorghinae</taxon>
        <taxon>Sorghum</taxon>
    </lineage>
</organism>
<keyword id="KW-0150">Chloroplast</keyword>
<keyword id="KW-0472">Membrane</keyword>
<keyword id="KW-0602">Photosynthesis</keyword>
<keyword id="KW-0604">Photosystem II</keyword>
<keyword id="KW-0934">Plastid</keyword>
<keyword id="KW-1185">Reference proteome</keyword>
<keyword id="KW-0793">Thylakoid</keyword>
<keyword id="KW-0812">Transmembrane</keyword>
<keyword id="KW-1133">Transmembrane helix</keyword>